<sequence>MSAHNRGTELDLSWISKIQVNHPAVLRRAEQIQARRTVKKEWQAAWLLKAVTFIDLTTLSGDDTSSNIQRLCYKAKYPIREDLLKALNMHDKGITTAAVCVYPARVCDAVKALKAAGCNIPVASVAAGFPAGQTHLKTRLEEIRLAVEDGATEIDVVINRSLVLTGQWEALYDEIRQFRKACGEAHLKTILATGELGTLTNVYKASMIAMMAGSDFIKTSTGKETVNATFPVAIVMLRAIRDFFWKTGNKIGFKPAGGIRSAKDSLAWLSLVKEELGDEWLKPELFRIGASTLLSDIERQIYHHVTGRYAAYHDLPMS</sequence>
<feature type="chain" id="PRO_0000057310" description="Deoxyribose-phosphate aldolase">
    <location>
        <begin position="1"/>
        <end position="318"/>
    </location>
</feature>
<feature type="active site" description="Proton donor/acceptor" evidence="1">
    <location>
        <position position="155"/>
    </location>
</feature>
<feature type="active site" description="Schiff-base intermediate with acetaldehyde" evidence="2">
    <location>
        <position position="218"/>
    </location>
</feature>
<feature type="active site" description="Proton donor/acceptor" evidence="2">
    <location>
        <position position="254"/>
    </location>
</feature>
<feature type="mutagenesis site" description="Abolishes deoxyribose-phosphate aldolase activity." evidence="2">
    <original>K</original>
    <variation>A</variation>
    <location>
        <position position="218"/>
    </location>
</feature>
<feature type="mutagenesis site" description="Abolishes deoxyribose-phosphate aldolase activity." evidence="2">
    <original>K</original>
    <variation>A</variation>
    <location>
        <position position="254"/>
    </location>
</feature>
<feature type="sequence conflict" description="In Ref. 2; BAD96261." evidence="3" ref="2">
    <original>N</original>
    <variation>S</variation>
    <location>
        <position position="159"/>
    </location>
</feature>
<feature type="sequence conflict" description="In Ref. 2; BAD96261." evidence="3" ref="2">
    <original>I</original>
    <variation>T</variation>
    <location>
        <position position="234"/>
    </location>
</feature>
<feature type="sequence conflict" description="In Ref. 2; BAD96261." evidence="3" ref="2">
    <original>I</original>
    <variation>T</variation>
    <location>
        <position position="240"/>
    </location>
</feature>
<organism>
    <name type="scientific">Homo sapiens</name>
    <name type="common">Human</name>
    <dbReference type="NCBI Taxonomy" id="9606"/>
    <lineage>
        <taxon>Eukaryota</taxon>
        <taxon>Metazoa</taxon>
        <taxon>Chordata</taxon>
        <taxon>Craniata</taxon>
        <taxon>Vertebrata</taxon>
        <taxon>Euteleostomi</taxon>
        <taxon>Mammalia</taxon>
        <taxon>Eutheria</taxon>
        <taxon>Euarchontoglires</taxon>
        <taxon>Primates</taxon>
        <taxon>Haplorrhini</taxon>
        <taxon>Catarrhini</taxon>
        <taxon>Hominidae</taxon>
        <taxon>Homo</taxon>
    </lineage>
</organism>
<name>DEOC_HUMAN</name>
<keyword id="KW-0963">Cytoplasm</keyword>
<keyword id="KW-0456">Lyase</keyword>
<keyword id="KW-0539">Nucleus</keyword>
<keyword id="KW-1267">Proteomics identification</keyword>
<keyword id="KW-1185">Reference proteome</keyword>
<keyword id="KW-0704">Schiff base</keyword>
<gene>
    <name type="primary">DERA</name>
    <name type="ORF">CGI-26</name>
</gene>
<proteinExistence type="evidence at protein level"/>
<reference key="1">
    <citation type="journal article" date="2000" name="Genome Res.">
        <title>Identification of novel human genes evolutionarily conserved in Caenorhabditis elegans by comparative proteomics.</title>
        <authorList>
            <person name="Lai C.-H."/>
            <person name="Chou C.-Y."/>
            <person name="Ch'ang L.-Y."/>
            <person name="Liu C.-S."/>
            <person name="Lin W.-C."/>
        </authorList>
    </citation>
    <scope>NUCLEOTIDE SEQUENCE [LARGE SCALE MRNA]</scope>
</reference>
<reference key="2">
    <citation type="submission" date="2005-04" db="EMBL/GenBank/DDBJ databases">
        <authorList>
            <person name="Suzuki Y."/>
            <person name="Sugano S."/>
            <person name="Totoki Y."/>
            <person name="Toyoda A."/>
            <person name="Takeda T."/>
            <person name="Sakaki Y."/>
            <person name="Tanaka A."/>
            <person name="Yokoyama S."/>
        </authorList>
    </citation>
    <scope>NUCLEOTIDE SEQUENCE [LARGE SCALE MRNA]</scope>
    <source>
        <tissue>Adipose tissue</tissue>
    </source>
</reference>
<reference key="3">
    <citation type="journal article" date="2004" name="Genome Res.">
        <title>The status, quality, and expansion of the NIH full-length cDNA project: the Mammalian Gene Collection (MGC).</title>
        <authorList>
            <consortium name="The MGC Project Team"/>
        </authorList>
    </citation>
    <scope>NUCLEOTIDE SEQUENCE [LARGE SCALE MRNA]</scope>
    <source>
        <tissue>Skin</tissue>
    </source>
</reference>
<reference key="4">
    <citation type="journal article" date="2011" name="BMC Syst. Biol.">
        <title>Initial characterization of the human central proteome.</title>
        <authorList>
            <person name="Burkard T.R."/>
            <person name="Planyavsky M."/>
            <person name="Kaupe I."/>
            <person name="Breitwieser F.P."/>
            <person name="Buerckstuemmer T."/>
            <person name="Bennett K.L."/>
            <person name="Superti-Furga G."/>
            <person name="Colinge J."/>
        </authorList>
    </citation>
    <scope>IDENTIFICATION BY MASS SPECTROMETRY [LARGE SCALE ANALYSIS]</scope>
</reference>
<reference key="5">
    <citation type="journal article" date="2014" name="Biochim. Biophys. Acta">
        <title>DERA is the human deoxyribose phosphate aldolase and is involved in stress response.</title>
        <authorList>
            <person name="Salleron L."/>
            <person name="Magistrelli G."/>
            <person name="Mary C."/>
            <person name="Fischer N."/>
            <person name="Bairoch A."/>
            <person name="Lane L."/>
        </authorList>
    </citation>
    <scope>FUNCTION</scope>
    <scope>CATALYTIC ACTIVITY</scope>
    <scope>ACTIVE SITE</scope>
    <scope>INTERACTION WITH YBX1</scope>
    <scope>TISSUE SPECIFICITY</scope>
    <scope>SUBCELLULAR LOCATION</scope>
    <scope>MUTAGENESIS OF LYS-218 AND LYS-254</scope>
</reference>
<reference key="6">
    <citation type="journal article" date="2014" name="J. Proteomics">
        <title>An enzyme assisted RP-RPLC approach for in-depth analysis of human liver phosphoproteome.</title>
        <authorList>
            <person name="Bian Y."/>
            <person name="Song C."/>
            <person name="Cheng K."/>
            <person name="Dong M."/>
            <person name="Wang F."/>
            <person name="Huang J."/>
            <person name="Sun D."/>
            <person name="Wang L."/>
            <person name="Ye M."/>
            <person name="Zou H."/>
        </authorList>
    </citation>
    <scope>IDENTIFICATION BY MASS SPECTROMETRY [LARGE SCALE ANALYSIS]</scope>
    <source>
        <tissue>Liver</tissue>
    </source>
</reference>
<protein>
    <recommendedName>
        <fullName>Deoxyribose-phosphate aldolase</fullName>
        <shortName>DERA</shortName>
        <ecNumber evidence="2">4.1.2.4</ecNumber>
    </recommendedName>
    <alternativeName>
        <fullName>2-deoxy-D-ribose 5-phosphate aldolase</fullName>
    </alternativeName>
    <alternativeName>
        <fullName>Phosphodeoxyriboaldolase</fullName>
        <shortName>Deoxyriboaldolase</shortName>
    </alternativeName>
</protein>
<dbReference type="EC" id="4.1.2.4" evidence="2"/>
<dbReference type="EMBL" id="AF132960">
    <property type="protein sequence ID" value="AAD27735.1"/>
    <property type="status" value="ALT_INIT"/>
    <property type="molecule type" value="mRNA"/>
</dbReference>
<dbReference type="EMBL" id="AK222541">
    <property type="protein sequence ID" value="BAD96261.1"/>
    <property type="status" value="ALT_INIT"/>
    <property type="molecule type" value="mRNA"/>
</dbReference>
<dbReference type="EMBL" id="BC056234">
    <property type="protein sequence ID" value="AAH56234.1"/>
    <property type="status" value="ALT_INIT"/>
    <property type="molecule type" value="mRNA"/>
</dbReference>
<dbReference type="CCDS" id="CCDS44838.1"/>
<dbReference type="RefSeq" id="NP_057038.2">
    <property type="nucleotide sequence ID" value="NM_015954.4"/>
</dbReference>
<dbReference type="SMR" id="Q9Y315"/>
<dbReference type="BioGRID" id="119262">
    <property type="interactions" value="54"/>
</dbReference>
<dbReference type="FunCoup" id="Q9Y315">
    <property type="interactions" value="1117"/>
</dbReference>
<dbReference type="IntAct" id="Q9Y315">
    <property type="interactions" value="18"/>
</dbReference>
<dbReference type="MINT" id="Q9Y315"/>
<dbReference type="STRING" id="9606.ENSP00000416583"/>
<dbReference type="ChEMBL" id="CHEMBL4295988"/>
<dbReference type="iPTMnet" id="Q9Y315"/>
<dbReference type="MetOSite" id="Q9Y315"/>
<dbReference type="PhosphoSitePlus" id="Q9Y315"/>
<dbReference type="BioMuta" id="DERA"/>
<dbReference type="DMDM" id="24636817"/>
<dbReference type="CPTAC" id="CPTAC-2724"/>
<dbReference type="jPOST" id="Q9Y315"/>
<dbReference type="MassIVE" id="Q9Y315"/>
<dbReference type="PaxDb" id="9606-ENSP00000416583"/>
<dbReference type="PeptideAtlas" id="Q9Y315"/>
<dbReference type="ProteomicsDB" id="85959"/>
<dbReference type="Pumba" id="Q9Y315"/>
<dbReference type="Antibodypedia" id="55098">
    <property type="antibodies" value="71 antibodies from 15 providers"/>
</dbReference>
<dbReference type="DNASU" id="51071"/>
<dbReference type="Ensembl" id="ENST00000428559.7">
    <property type="protein sequence ID" value="ENSP00000416583.2"/>
    <property type="gene ID" value="ENSG00000023697.13"/>
</dbReference>
<dbReference type="GeneID" id="51071"/>
<dbReference type="KEGG" id="hsa:51071"/>
<dbReference type="MANE-Select" id="ENST00000428559.7">
    <property type="protein sequence ID" value="ENSP00000416583.2"/>
    <property type="RefSeq nucleotide sequence ID" value="NM_015954.4"/>
    <property type="RefSeq protein sequence ID" value="NP_057038.2"/>
</dbReference>
<dbReference type="UCSC" id="uc001rde.4">
    <property type="organism name" value="human"/>
</dbReference>
<dbReference type="AGR" id="HGNC:24269"/>
<dbReference type="CTD" id="51071"/>
<dbReference type="DisGeNET" id="51071"/>
<dbReference type="GeneCards" id="DERA"/>
<dbReference type="HGNC" id="HGNC:24269">
    <property type="gene designation" value="DERA"/>
</dbReference>
<dbReference type="HPA" id="ENSG00000023697">
    <property type="expression patterns" value="Tissue enhanced (liver)"/>
</dbReference>
<dbReference type="MIM" id="619668">
    <property type="type" value="gene"/>
</dbReference>
<dbReference type="neXtProt" id="NX_Q9Y315"/>
<dbReference type="OpenTargets" id="ENSG00000023697"/>
<dbReference type="PharmGKB" id="PA134943367"/>
<dbReference type="VEuPathDB" id="HostDB:ENSG00000023697"/>
<dbReference type="eggNOG" id="KOG3981">
    <property type="taxonomic scope" value="Eukaryota"/>
</dbReference>
<dbReference type="GeneTree" id="ENSGT00390000007878"/>
<dbReference type="HOGENOM" id="CLU_053595_3_0_1"/>
<dbReference type="InParanoid" id="Q9Y315"/>
<dbReference type="OMA" id="RYSGPDY"/>
<dbReference type="OrthoDB" id="70823at2759"/>
<dbReference type="PAN-GO" id="Q9Y315">
    <property type="GO annotations" value="3 GO annotations based on evolutionary models"/>
</dbReference>
<dbReference type="PhylomeDB" id="Q9Y315"/>
<dbReference type="TreeFam" id="TF314251"/>
<dbReference type="BRENDA" id="4.1.2.4">
    <property type="organism ID" value="2681"/>
</dbReference>
<dbReference type="PathwayCommons" id="Q9Y315"/>
<dbReference type="Reactome" id="R-HSA-6798695">
    <property type="pathway name" value="Neutrophil degranulation"/>
</dbReference>
<dbReference type="Reactome" id="R-HSA-71336">
    <property type="pathway name" value="Pentose phosphate pathway"/>
</dbReference>
<dbReference type="SABIO-RK" id="Q9Y315"/>
<dbReference type="SignaLink" id="Q9Y315"/>
<dbReference type="SIGNOR" id="Q9Y315"/>
<dbReference type="UniPathway" id="UPA00002">
    <property type="reaction ID" value="UER00468"/>
</dbReference>
<dbReference type="BioGRID-ORCS" id="51071">
    <property type="hits" value="11 hits in 1150 CRISPR screens"/>
</dbReference>
<dbReference type="CD-CODE" id="DEE660B4">
    <property type="entry name" value="Stress granule"/>
</dbReference>
<dbReference type="ChiTaRS" id="DERA">
    <property type="organism name" value="human"/>
</dbReference>
<dbReference type="GenomeRNAi" id="51071"/>
<dbReference type="Pharos" id="Q9Y315">
    <property type="development level" value="Tbio"/>
</dbReference>
<dbReference type="PRO" id="PR:Q9Y315"/>
<dbReference type="Proteomes" id="UP000005640">
    <property type="component" value="Chromosome 12"/>
</dbReference>
<dbReference type="RNAct" id="Q9Y315">
    <property type="molecule type" value="protein"/>
</dbReference>
<dbReference type="Bgee" id="ENSG00000023697">
    <property type="expression patterns" value="Expressed in secondary oocyte and 205 other cell types or tissues"/>
</dbReference>
<dbReference type="ExpressionAtlas" id="Q9Y315">
    <property type="expression patterns" value="baseline and differential"/>
</dbReference>
<dbReference type="GO" id="GO:0005829">
    <property type="term" value="C:cytosol"/>
    <property type="evidence" value="ECO:0000304"/>
    <property type="project" value="Reactome"/>
</dbReference>
<dbReference type="GO" id="GO:0005576">
    <property type="term" value="C:extracellular region"/>
    <property type="evidence" value="ECO:0000304"/>
    <property type="project" value="Reactome"/>
</dbReference>
<dbReference type="GO" id="GO:1904813">
    <property type="term" value="C:ficolin-1-rich granule lumen"/>
    <property type="evidence" value="ECO:0000304"/>
    <property type="project" value="Reactome"/>
</dbReference>
<dbReference type="GO" id="GO:0005654">
    <property type="term" value="C:nucleoplasm"/>
    <property type="evidence" value="ECO:0000314"/>
    <property type="project" value="HPA"/>
</dbReference>
<dbReference type="GO" id="GO:0034774">
    <property type="term" value="C:secretory granule lumen"/>
    <property type="evidence" value="ECO:0000304"/>
    <property type="project" value="Reactome"/>
</dbReference>
<dbReference type="GO" id="GO:0004139">
    <property type="term" value="F:deoxyribose-phosphate aldolase activity"/>
    <property type="evidence" value="ECO:0000314"/>
    <property type="project" value="UniProtKB"/>
</dbReference>
<dbReference type="GO" id="GO:0016052">
    <property type="term" value="P:carbohydrate catabolic process"/>
    <property type="evidence" value="ECO:0000318"/>
    <property type="project" value="GO_Central"/>
</dbReference>
<dbReference type="GO" id="GO:0046121">
    <property type="term" value="P:deoxyribonucleoside catabolic process"/>
    <property type="evidence" value="ECO:0000314"/>
    <property type="project" value="UniProtKB"/>
</dbReference>
<dbReference type="GO" id="GO:0009264">
    <property type="term" value="P:deoxyribonucleotide catabolic process"/>
    <property type="evidence" value="ECO:0000318"/>
    <property type="project" value="GO_Central"/>
</dbReference>
<dbReference type="GO" id="GO:0046386">
    <property type="term" value="P:deoxyribose phosphate catabolic process"/>
    <property type="evidence" value="ECO:0007669"/>
    <property type="project" value="UniProtKB-UniPathway"/>
</dbReference>
<dbReference type="GO" id="GO:0006098">
    <property type="term" value="P:pentose-phosphate shunt"/>
    <property type="evidence" value="ECO:0000304"/>
    <property type="project" value="Reactome"/>
</dbReference>
<dbReference type="CDD" id="cd00959">
    <property type="entry name" value="DeoC"/>
    <property type="match status" value="1"/>
</dbReference>
<dbReference type="FunFam" id="3.20.20.70:FF:000103">
    <property type="entry name" value="Putative deoxyribose-phosphate aldolase"/>
    <property type="match status" value="1"/>
</dbReference>
<dbReference type="Gene3D" id="3.20.20.70">
    <property type="entry name" value="Aldolase class I"/>
    <property type="match status" value="1"/>
</dbReference>
<dbReference type="InterPro" id="IPR013785">
    <property type="entry name" value="Aldolase_TIM"/>
</dbReference>
<dbReference type="InterPro" id="IPR011343">
    <property type="entry name" value="DeoC"/>
</dbReference>
<dbReference type="InterPro" id="IPR002915">
    <property type="entry name" value="DeoC/FbaB/LacD_aldolase"/>
</dbReference>
<dbReference type="NCBIfam" id="TIGR00126">
    <property type="entry name" value="deoC"/>
    <property type="match status" value="1"/>
</dbReference>
<dbReference type="PANTHER" id="PTHR10889">
    <property type="entry name" value="DEOXYRIBOSE-PHOSPHATE ALDOLASE"/>
    <property type="match status" value="1"/>
</dbReference>
<dbReference type="PANTHER" id="PTHR10889:SF3">
    <property type="entry name" value="DEOXYRIBOSE-PHOSPHATE ALDOLASE"/>
    <property type="match status" value="1"/>
</dbReference>
<dbReference type="Pfam" id="PF01791">
    <property type="entry name" value="DeoC"/>
    <property type="match status" value="1"/>
</dbReference>
<dbReference type="PIRSF" id="PIRSF001357">
    <property type="entry name" value="DeoC"/>
    <property type="match status" value="1"/>
</dbReference>
<dbReference type="SMART" id="SM01133">
    <property type="entry name" value="DeoC"/>
    <property type="match status" value="1"/>
</dbReference>
<dbReference type="SUPFAM" id="SSF51569">
    <property type="entry name" value="Aldolase"/>
    <property type="match status" value="1"/>
</dbReference>
<evidence type="ECO:0000250" key="1">
    <source>
        <dbReference type="UniProtKB" id="P0A6L0"/>
    </source>
</evidence>
<evidence type="ECO:0000269" key="2">
    <source>
    </source>
</evidence>
<evidence type="ECO:0000305" key="3"/>
<accession>Q9Y315</accession>
<accession>Q53HN9</accession>
<accession>Q6PHW2</accession>
<comment type="function">
    <text evidence="2">Catalyzes a reversible aldol reaction between acetaldehyde and D-glyceraldehyde 3-phosphate to generate 2-deoxy-D-ribose 5-phosphate. Participates in stress granule (SG) assembly. May allow ATP production from extracellular deoxyinosine in conditions of energy deprivation.</text>
</comment>
<comment type="catalytic activity">
    <reaction evidence="2">
        <text>2-deoxy-D-ribose 5-phosphate = D-glyceraldehyde 3-phosphate + acetaldehyde</text>
        <dbReference type="Rhea" id="RHEA:12821"/>
        <dbReference type="ChEBI" id="CHEBI:15343"/>
        <dbReference type="ChEBI" id="CHEBI:59776"/>
        <dbReference type="ChEBI" id="CHEBI:62877"/>
        <dbReference type="EC" id="4.1.2.4"/>
    </reaction>
</comment>
<comment type="pathway">
    <text>Carbohydrate degradation; 2-deoxy-D-ribose 1-phosphate degradation; D-glyceraldehyde 3-phosphate and acetaldehyde from 2-deoxy-alpha-D-ribose 1-phosphate: step 2/2.</text>
</comment>
<comment type="subunit">
    <text evidence="2">Interacts with YBX1.</text>
</comment>
<comment type="interaction">
    <interactant intactId="EBI-1048152">
        <id>Q9Y315</id>
    </interactant>
    <interactant intactId="EBI-1044483">
        <id>Q8IZ83</id>
        <label>ALDH16A1</label>
    </interactant>
    <organismsDiffer>false</organismsDiffer>
    <experiments>8</experiments>
</comment>
<comment type="interaction">
    <interactant intactId="EBI-1048152">
        <id>Q9Y315</id>
    </interactant>
    <interactant intactId="EBI-2556750">
        <id>Q03933</id>
        <label>HSF2</label>
    </interactant>
    <organismsDiffer>false</organismsDiffer>
    <experiments>3</experiments>
</comment>
<comment type="subcellular location">
    <subcellularLocation>
        <location evidence="2">Cytoplasm</location>
    </subcellularLocation>
    <subcellularLocation>
        <location evidence="2">Cytoplasmic granule</location>
    </subcellularLocation>
    <subcellularLocation>
        <location evidence="2">Nucleus</location>
    </subcellularLocation>
    <text evidence="2">Recruited to stress granules but not to processing bodies upon arsenite or clotrimazole treatment or energy deprivation.</text>
</comment>
<comment type="tissue specificity">
    <text evidence="2">Mainly expressed in liver, lung and colon.</text>
</comment>
<comment type="similarity">
    <text evidence="3">Belongs to the DeoC/FbaB aldolase family. DeoC type 2 subfamily.</text>
</comment>
<comment type="sequence caution" evidence="3">
    <conflict type="erroneous initiation">
        <sequence resource="EMBL-CDS" id="AAD27735"/>
    </conflict>
</comment>
<comment type="sequence caution" evidence="3">
    <conflict type="erroneous initiation">
        <sequence resource="EMBL-CDS" id="AAH56234"/>
    </conflict>
</comment>
<comment type="sequence caution" evidence="3">
    <conflict type="erroneous initiation">
        <sequence resource="EMBL-CDS" id="BAD96261"/>
    </conflict>
</comment>